<comment type="function">
    <text evidence="1">Provides the (R)-glutamate required for cell wall biosynthesis.</text>
</comment>
<comment type="catalytic activity">
    <reaction evidence="1">
        <text>L-glutamate = D-glutamate</text>
        <dbReference type="Rhea" id="RHEA:12813"/>
        <dbReference type="ChEBI" id="CHEBI:29985"/>
        <dbReference type="ChEBI" id="CHEBI:29986"/>
        <dbReference type="EC" id="5.1.1.3"/>
    </reaction>
</comment>
<comment type="pathway">
    <text evidence="1">Cell wall biogenesis; peptidoglycan biosynthesis.</text>
</comment>
<comment type="similarity">
    <text evidence="1">Belongs to the aspartate/glutamate racemases family.</text>
</comment>
<dbReference type="EC" id="5.1.1.3" evidence="1"/>
<dbReference type="EMBL" id="CP001186">
    <property type="protein sequence ID" value="ACK93718.1"/>
    <property type="molecule type" value="Genomic_DNA"/>
</dbReference>
<dbReference type="SMR" id="B7IIZ3"/>
<dbReference type="KEGG" id="bcg:BCG9842_B0632"/>
<dbReference type="HOGENOM" id="CLU_052344_0_2_9"/>
<dbReference type="UniPathway" id="UPA00219"/>
<dbReference type="Proteomes" id="UP000006744">
    <property type="component" value="Chromosome"/>
</dbReference>
<dbReference type="GO" id="GO:0008881">
    <property type="term" value="F:glutamate racemase activity"/>
    <property type="evidence" value="ECO:0007669"/>
    <property type="project" value="UniProtKB-UniRule"/>
</dbReference>
<dbReference type="GO" id="GO:0071555">
    <property type="term" value="P:cell wall organization"/>
    <property type="evidence" value="ECO:0007669"/>
    <property type="project" value="UniProtKB-KW"/>
</dbReference>
<dbReference type="GO" id="GO:0009252">
    <property type="term" value="P:peptidoglycan biosynthetic process"/>
    <property type="evidence" value="ECO:0007669"/>
    <property type="project" value="UniProtKB-UniRule"/>
</dbReference>
<dbReference type="GO" id="GO:0008360">
    <property type="term" value="P:regulation of cell shape"/>
    <property type="evidence" value="ECO:0007669"/>
    <property type="project" value="UniProtKB-KW"/>
</dbReference>
<dbReference type="FunFam" id="3.40.50.1860:FF:000002">
    <property type="entry name" value="Glutamate racemase"/>
    <property type="match status" value="1"/>
</dbReference>
<dbReference type="Gene3D" id="3.40.50.1860">
    <property type="match status" value="2"/>
</dbReference>
<dbReference type="HAMAP" id="MF_00258">
    <property type="entry name" value="Glu_racemase"/>
    <property type="match status" value="1"/>
</dbReference>
<dbReference type="InterPro" id="IPR015942">
    <property type="entry name" value="Asp/Glu/hydantoin_racemase"/>
</dbReference>
<dbReference type="InterPro" id="IPR001920">
    <property type="entry name" value="Asp/Glu_race"/>
</dbReference>
<dbReference type="InterPro" id="IPR018187">
    <property type="entry name" value="Asp/Glu_racemase_AS_1"/>
</dbReference>
<dbReference type="InterPro" id="IPR033134">
    <property type="entry name" value="Asp/Glu_racemase_AS_2"/>
</dbReference>
<dbReference type="InterPro" id="IPR004391">
    <property type="entry name" value="Glu_race"/>
</dbReference>
<dbReference type="NCBIfam" id="TIGR00067">
    <property type="entry name" value="glut_race"/>
    <property type="match status" value="1"/>
</dbReference>
<dbReference type="NCBIfam" id="NF002035">
    <property type="entry name" value="PRK00865.1-3"/>
    <property type="match status" value="1"/>
</dbReference>
<dbReference type="PANTHER" id="PTHR21198">
    <property type="entry name" value="GLUTAMATE RACEMASE"/>
    <property type="match status" value="1"/>
</dbReference>
<dbReference type="PANTHER" id="PTHR21198:SF2">
    <property type="entry name" value="GLUTAMATE RACEMASE"/>
    <property type="match status" value="1"/>
</dbReference>
<dbReference type="Pfam" id="PF01177">
    <property type="entry name" value="Asp_Glu_race"/>
    <property type="match status" value="1"/>
</dbReference>
<dbReference type="SUPFAM" id="SSF53681">
    <property type="entry name" value="Aspartate/glutamate racemase"/>
    <property type="match status" value="2"/>
</dbReference>
<dbReference type="PROSITE" id="PS00923">
    <property type="entry name" value="ASP_GLU_RACEMASE_1"/>
    <property type="match status" value="1"/>
</dbReference>
<dbReference type="PROSITE" id="PS00924">
    <property type="entry name" value="ASP_GLU_RACEMASE_2"/>
    <property type="match status" value="1"/>
</dbReference>
<accession>B7IIZ3</accession>
<name>MURI_BACC2</name>
<protein>
    <recommendedName>
        <fullName evidence="1">Glutamate racemase</fullName>
        <ecNumber evidence="1">5.1.1.3</ecNumber>
    </recommendedName>
</protein>
<sequence>MKLNRAIGVIDSGVGGLTVAKELIRQLPKERIIYLGDTARCPYGPRSREEVRQFTWEMTEHLLDLNIKMLVIACNTATAVVLEEMQKQLPIPVVGVIHPGSRTALKVTNTYHVGIIGTIGTVKSGAYEEALKSINNRVMVESLACPPFVELVESGNFESEMAYEVVRETLQPLKSTDIDTLILGCTHYPILGPVIKKVMGDKVQLISSGDETAREVSTILYHSKMLNEGEEQSDHLFLTTGKIGLFKEIASKWFGQPIENVKHIHLEKE</sequence>
<gene>
    <name evidence="1" type="primary">murI</name>
    <name type="ordered locus">BCG9842_B0632</name>
</gene>
<reference key="1">
    <citation type="submission" date="2008-10" db="EMBL/GenBank/DDBJ databases">
        <title>Genome sequence of Bacillus cereus G9842.</title>
        <authorList>
            <person name="Dodson R.J."/>
            <person name="Durkin A.S."/>
            <person name="Rosovitz M.J."/>
            <person name="Rasko D.A."/>
            <person name="Hoffmaster A."/>
            <person name="Ravel J."/>
            <person name="Sutton G."/>
        </authorList>
    </citation>
    <scope>NUCLEOTIDE SEQUENCE [LARGE SCALE GENOMIC DNA]</scope>
    <source>
        <strain>G9842</strain>
    </source>
</reference>
<proteinExistence type="inferred from homology"/>
<feature type="chain" id="PRO_1000119181" description="Glutamate racemase">
    <location>
        <begin position="1"/>
        <end position="269"/>
    </location>
</feature>
<feature type="active site" description="Proton donor/acceptor" evidence="1">
    <location>
        <position position="74"/>
    </location>
</feature>
<feature type="active site" description="Proton donor/acceptor" evidence="1">
    <location>
        <position position="185"/>
    </location>
</feature>
<feature type="binding site" evidence="1">
    <location>
        <begin position="11"/>
        <end position="12"/>
    </location>
    <ligand>
        <name>substrate</name>
    </ligand>
</feature>
<feature type="binding site" evidence="1">
    <location>
        <begin position="43"/>
        <end position="44"/>
    </location>
    <ligand>
        <name>substrate</name>
    </ligand>
</feature>
<feature type="binding site" evidence="1">
    <location>
        <begin position="75"/>
        <end position="76"/>
    </location>
    <ligand>
        <name>substrate</name>
    </ligand>
</feature>
<feature type="binding site" evidence="1">
    <location>
        <begin position="186"/>
        <end position="187"/>
    </location>
    <ligand>
        <name>substrate</name>
    </ligand>
</feature>
<keyword id="KW-0133">Cell shape</keyword>
<keyword id="KW-0961">Cell wall biogenesis/degradation</keyword>
<keyword id="KW-0413">Isomerase</keyword>
<keyword id="KW-0573">Peptidoglycan synthesis</keyword>
<organism>
    <name type="scientific">Bacillus cereus (strain G9842)</name>
    <dbReference type="NCBI Taxonomy" id="405531"/>
    <lineage>
        <taxon>Bacteria</taxon>
        <taxon>Bacillati</taxon>
        <taxon>Bacillota</taxon>
        <taxon>Bacilli</taxon>
        <taxon>Bacillales</taxon>
        <taxon>Bacillaceae</taxon>
        <taxon>Bacillus</taxon>
        <taxon>Bacillus cereus group</taxon>
    </lineage>
</organism>
<evidence type="ECO:0000255" key="1">
    <source>
        <dbReference type="HAMAP-Rule" id="MF_00258"/>
    </source>
</evidence>